<gene>
    <name type="primary">thiB</name>
    <name type="ordered locus">BruAb1_1742</name>
</gene>
<evidence type="ECO:0000250" key="1">
    <source>
        <dbReference type="UniProtKB" id="P31550"/>
    </source>
</evidence>
<evidence type="ECO:0000250" key="2">
    <source>
        <dbReference type="UniProtKB" id="Q7CR85"/>
    </source>
</evidence>
<evidence type="ECO:0000255" key="3"/>
<evidence type="ECO:0000305" key="4"/>
<feature type="signal peptide" evidence="3">
    <location>
        <begin position="1"/>
        <end position="23"/>
    </location>
</feature>
<feature type="chain" id="PRO_0000282911" description="Thiamine-binding periplasmic protein">
    <location>
        <begin position="24"/>
        <end position="334"/>
    </location>
</feature>
<feature type="binding site" evidence="1">
    <location>
        <begin position="64"/>
        <end position="65"/>
    </location>
    <ligand>
        <name>thiamine</name>
        <dbReference type="ChEBI" id="CHEBI:18385"/>
    </ligand>
</feature>
<feature type="binding site" evidence="1">
    <location>
        <begin position="166"/>
        <end position="167"/>
    </location>
    <ligand>
        <name>thiamine</name>
        <dbReference type="ChEBI" id="CHEBI:18385"/>
    </ligand>
</feature>
<feature type="binding site" evidence="1">
    <location>
        <position position="202"/>
    </location>
    <ligand>
        <name>thiamine</name>
        <dbReference type="ChEBI" id="CHEBI:18385"/>
    </ligand>
</feature>
<feature type="binding site" evidence="1">
    <location>
        <begin position="220"/>
        <end position="223"/>
    </location>
    <ligand>
        <name>thiamine</name>
        <dbReference type="ChEBI" id="CHEBI:18385"/>
    </ligand>
</feature>
<accession>Q57BC4</accession>
<comment type="function">
    <text evidence="1">Part of the ABC transporter complex ThiBPQ involved in thiamine import.</text>
</comment>
<comment type="subunit">
    <text evidence="2">The complex is composed of two ATP-binding proteins (ThiQ), two transmembrane proteins (ThiP) and a solute-binding protein (ThiB).</text>
</comment>
<comment type="subcellular location">
    <subcellularLocation>
        <location evidence="1">Periplasm</location>
    </subcellularLocation>
</comment>
<comment type="similarity">
    <text evidence="4">Belongs to the bacterial solute-binding protein 1 family.</text>
</comment>
<protein>
    <recommendedName>
        <fullName>Thiamine-binding periplasmic protein</fullName>
    </recommendedName>
</protein>
<keyword id="KW-0574">Periplasm</keyword>
<keyword id="KW-0732">Signal</keyword>
<keyword id="KW-0813">Transport</keyword>
<sequence>MRLLSLLTFSLFAVIGLAPAAQAKDKLTIYTYDSFVSEWGPGPKVKENFEKECDCEVNFVASADGVALLNRLKLEGSKTAADIVLGLDTNLTTEARASGFFAPSGIDQTNVKVPGNFKDDIFVPYDYGYFAVVYDSEKLPNPPKSLKELVEGDPAQKIVLQDPRTATPGLGMLLWMKSVYGDEAGAAWQKLQKRVLTVTPGWSEAYGLFTKGEAPMVLSYTTSPAYHMVVEKTDRYKALAYPEGNYLQIELAAQTTTGAKNPLAKKFLAFMTGPGFQDLIPETNWMFPAGKTSKPLPAAFDALPKPEKTLLIPPYEVAKNRRLWVNEWLAATSR</sequence>
<proteinExistence type="inferred from homology"/>
<dbReference type="EMBL" id="AE017223">
    <property type="protein sequence ID" value="AAX75060.1"/>
    <property type="molecule type" value="Genomic_DNA"/>
</dbReference>
<dbReference type="RefSeq" id="WP_002964841.1">
    <property type="nucleotide sequence ID" value="NC_006932.1"/>
</dbReference>
<dbReference type="SMR" id="Q57BC4"/>
<dbReference type="EnsemblBacteria" id="AAX75060">
    <property type="protein sequence ID" value="AAX75060"/>
    <property type="gene ID" value="BruAb1_1742"/>
</dbReference>
<dbReference type="GeneID" id="93017892"/>
<dbReference type="KEGG" id="bmb:BruAb1_1742"/>
<dbReference type="HOGENOM" id="CLU_026974_6_0_5"/>
<dbReference type="Proteomes" id="UP000000540">
    <property type="component" value="Chromosome I"/>
</dbReference>
<dbReference type="GO" id="GO:0030288">
    <property type="term" value="C:outer membrane-bounded periplasmic space"/>
    <property type="evidence" value="ECO:0007669"/>
    <property type="project" value="InterPro"/>
</dbReference>
<dbReference type="GO" id="GO:0030975">
    <property type="term" value="F:thiamine binding"/>
    <property type="evidence" value="ECO:0007669"/>
    <property type="project" value="InterPro"/>
</dbReference>
<dbReference type="GO" id="GO:0030976">
    <property type="term" value="F:thiamine pyrophosphate binding"/>
    <property type="evidence" value="ECO:0007669"/>
    <property type="project" value="TreeGrafter"/>
</dbReference>
<dbReference type="GO" id="GO:0015888">
    <property type="term" value="P:thiamine transport"/>
    <property type="evidence" value="ECO:0007669"/>
    <property type="project" value="InterPro"/>
</dbReference>
<dbReference type="CDD" id="cd13545">
    <property type="entry name" value="PBP2_TbpA"/>
    <property type="match status" value="1"/>
</dbReference>
<dbReference type="Gene3D" id="3.40.190.10">
    <property type="entry name" value="Periplasmic binding protein-like II"/>
    <property type="match status" value="2"/>
</dbReference>
<dbReference type="InterPro" id="IPR006059">
    <property type="entry name" value="SBP"/>
</dbReference>
<dbReference type="InterPro" id="IPR005967">
    <property type="entry name" value="ThiB"/>
</dbReference>
<dbReference type="InterPro" id="IPR005948">
    <property type="entry name" value="ThiB-like"/>
</dbReference>
<dbReference type="NCBIfam" id="TIGR01254">
    <property type="entry name" value="sfuA"/>
    <property type="match status" value="1"/>
</dbReference>
<dbReference type="NCBIfam" id="TIGR01276">
    <property type="entry name" value="thiB"/>
    <property type="match status" value="1"/>
</dbReference>
<dbReference type="PANTHER" id="PTHR30006:SF3">
    <property type="entry name" value="THIAMINE-BINDING PERIPLASMIC PROTEIN"/>
    <property type="match status" value="1"/>
</dbReference>
<dbReference type="PANTHER" id="PTHR30006">
    <property type="entry name" value="THIAMINE-BINDING PERIPLASMIC PROTEIN-RELATED"/>
    <property type="match status" value="1"/>
</dbReference>
<dbReference type="Pfam" id="PF01547">
    <property type="entry name" value="SBP_bac_1"/>
    <property type="match status" value="1"/>
</dbReference>
<dbReference type="SUPFAM" id="SSF53850">
    <property type="entry name" value="Periplasmic binding protein-like II"/>
    <property type="match status" value="1"/>
</dbReference>
<reference key="1">
    <citation type="journal article" date="2005" name="J. Bacteriol.">
        <title>Completion of the genome sequence of Brucella abortus and comparison to the highly similar genomes of Brucella melitensis and Brucella suis.</title>
        <authorList>
            <person name="Halling S.M."/>
            <person name="Peterson-Burch B.D."/>
            <person name="Bricker B.J."/>
            <person name="Zuerner R.L."/>
            <person name="Qing Z."/>
            <person name="Li L.-L."/>
            <person name="Kapur V."/>
            <person name="Alt D.P."/>
            <person name="Olsen S.C."/>
        </authorList>
    </citation>
    <scope>NUCLEOTIDE SEQUENCE [LARGE SCALE GENOMIC DNA]</scope>
    <source>
        <strain>9-941</strain>
    </source>
</reference>
<organism>
    <name type="scientific">Brucella abortus biovar 1 (strain 9-941)</name>
    <dbReference type="NCBI Taxonomy" id="262698"/>
    <lineage>
        <taxon>Bacteria</taxon>
        <taxon>Pseudomonadati</taxon>
        <taxon>Pseudomonadota</taxon>
        <taxon>Alphaproteobacteria</taxon>
        <taxon>Hyphomicrobiales</taxon>
        <taxon>Brucellaceae</taxon>
        <taxon>Brucella/Ochrobactrum group</taxon>
        <taxon>Brucella</taxon>
    </lineage>
</organism>
<name>THIB_BRUAB</name>